<reference key="1">
    <citation type="journal article" date="2004" name="Proc. Natl. Acad. Sci. U.S.A.">
        <title>Insights into the evolution of Yersinia pestis through whole-genome comparison with Yersinia pseudotuberculosis.</title>
        <authorList>
            <person name="Chain P.S.G."/>
            <person name="Carniel E."/>
            <person name="Larimer F.W."/>
            <person name="Lamerdin J."/>
            <person name="Stoutland P.O."/>
            <person name="Regala W.M."/>
            <person name="Georgescu A.M."/>
            <person name="Vergez L.M."/>
            <person name="Land M.L."/>
            <person name="Motin V.L."/>
            <person name="Brubaker R.R."/>
            <person name="Fowler J."/>
            <person name="Hinnebusch J."/>
            <person name="Marceau M."/>
            <person name="Medigue C."/>
            <person name="Simonet M."/>
            <person name="Chenal-Francisque V."/>
            <person name="Souza B."/>
            <person name="Dacheux D."/>
            <person name="Elliott J.M."/>
            <person name="Derbise A."/>
            <person name="Hauser L.J."/>
            <person name="Garcia E."/>
        </authorList>
    </citation>
    <scope>NUCLEOTIDE SEQUENCE [LARGE SCALE GENOMIC DNA]</scope>
    <source>
        <strain>IP32953</strain>
    </source>
</reference>
<keyword id="KW-0694">RNA-binding</keyword>
<keyword id="KW-0346">Stress response</keyword>
<accession>Q66FB5</accession>
<sequence length="101" mass="11130">MAKGQSLQDPFLNALRRERVPVSIYLVNGIKLQGQVESFDQFVILLKNTVSQMVYKHAISTVVPSRPVSHHSNTPSGSTNNYHGSNPSAPQQPQQDSDDAE</sequence>
<evidence type="ECO:0000255" key="1">
    <source>
        <dbReference type="HAMAP-Rule" id="MF_00436"/>
    </source>
</evidence>
<evidence type="ECO:0000255" key="2">
    <source>
        <dbReference type="PROSITE-ProRule" id="PRU01346"/>
    </source>
</evidence>
<evidence type="ECO:0000256" key="3">
    <source>
        <dbReference type="SAM" id="MobiDB-lite"/>
    </source>
</evidence>
<protein>
    <recommendedName>
        <fullName evidence="1">RNA-binding protein Hfq</fullName>
    </recommendedName>
</protein>
<comment type="function">
    <text evidence="1">RNA chaperone that binds small regulatory RNA (sRNAs) and mRNAs to facilitate mRNA translational regulation in response to envelope stress, environmental stress and changes in metabolite concentrations. Also binds with high specificity to tRNAs.</text>
</comment>
<comment type="subunit">
    <text evidence="1">Homohexamer.</text>
</comment>
<comment type="similarity">
    <text evidence="1">Belongs to the Hfq family.</text>
</comment>
<proteinExistence type="inferred from homology"/>
<feature type="chain" id="PRO_0000095610" description="RNA-binding protein Hfq">
    <location>
        <begin position="1"/>
        <end position="101"/>
    </location>
</feature>
<feature type="domain" description="Sm" evidence="2">
    <location>
        <begin position="9"/>
        <end position="68"/>
    </location>
</feature>
<feature type="region of interest" description="Disordered" evidence="3">
    <location>
        <begin position="63"/>
        <end position="101"/>
    </location>
</feature>
<feature type="compositionally biased region" description="Polar residues" evidence="3">
    <location>
        <begin position="70"/>
        <end position="86"/>
    </location>
</feature>
<dbReference type="EMBL" id="BX936398">
    <property type="protein sequence ID" value="CAH19665.1"/>
    <property type="molecule type" value="Genomic_DNA"/>
</dbReference>
<dbReference type="RefSeq" id="WP_002209151.1">
    <property type="nucleotide sequence ID" value="NZ_CP009712.1"/>
</dbReference>
<dbReference type="SMR" id="Q66FB5"/>
<dbReference type="GeneID" id="58049160"/>
<dbReference type="KEGG" id="ypo:BZ17_2139"/>
<dbReference type="KEGG" id="yps:YPTB0425"/>
<dbReference type="PATRIC" id="fig|273123.14.peg.2267"/>
<dbReference type="Proteomes" id="UP000001011">
    <property type="component" value="Chromosome"/>
</dbReference>
<dbReference type="GO" id="GO:0005829">
    <property type="term" value="C:cytosol"/>
    <property type="evidence" value="ECO:0007669"/>
    <property type="project" value="TreeGrafter"/>
</dbReference>
<dbReference type="GO" id="GO:0003723">
    <property type="term" value="F:RNA binding"/>
    <property type="evidence" value="ECO:0007669"/>
    <property type="project" value="UniProtKB-UniRule"/>
</dbReference>
<dbReference type="GO" id="GO:0006355">
    <property type="term" value="P:regulation of DNA-templated transcription"/>
    <property type="evidence" value="ECO:0007669"/>
    <property type="project" value="InterPro"/>
</dbReference>
<dbReference type="GO" id="GO:0043487">
    <property type="term" value="P:regulation of RNA stability"/>
    <property type="evidence" value="ECO:0007669"/>
    <property type="project" value="TreeGrafter"/>
</dbReference>
<dbReference type="GO" id="GO:0045974">
    <property type="term" value="P:regulation of translation, ncRNA-mediated"/>
    <property type="evidence" value="ECO:0007669"/>
    <property type="project" value="TreeGrafter"/>
</dbReference>
<dbReference type="CDD" id="cd01716">
    <property type="entry name" value="Hfq"/>
    <property type="match status" value="1"/>
</dbReference>
<dbReference type="FunFam" id="2.30.30.100:FF:000001">
    <property type="entry name" value="RNA-binding protein Hfq"/>
    <property type="match status" value="1"/>
</dbReference>
<dbReference type="Gene3D" id="2.30.30.100">
    <property type="match status" value="1"/>
</dbReference>
<dbReference type="HAMAP" id="MF_00436">
    <property type="entry name" value="Hfq"/>
    <property type="match status" value="1"/>
</dbReference>
<dbReference type="InterPro" id="IPR005001">
    <property type="entry name" value="Hfq"/>
</dbReference>
<dbReference type="InterPro" id="IPR010920">
    <property type="entry name" value="LSM_dom_sf"/>
</dbReference>
<dbReference type="InterPro" id="IPR047575">
    <property type="entry name" value="Sm"/>
</dbReference>
<dbReference type="NCBIfam" id="TIGR02383">
    <property type="entry name" value="Hfq"/>
    <property type="match status" value="1"/>
</dbReference>
<dbReference type="NCBIfam" id="NF001602">
    <property type="entry name" value="PRK00395.1"/>
    <property type="match status" value="1"/>
</dbReference>
<dbReference type="PANTHER" id="PTHR34772">
    <property type="entry name" value="RNA-BINDING PROTEIN HFQ"/>
    <property type="match status" value="1"/>
</dbReference>
<dbReference type="PANTHER" id="PTHR34772:SF1">
    <property type="entry name" value="RNA-BINDING PROTEIN HFQ"/>
    <property type="match status" value="1"/>
</dbReference>
<dbReference type="Pfam" id="PF17209">
    <property type="entry name" value="Hfq"/>
    <property type="match status" value="1"/>
</dbReference>
<dbReference type="SUPFAM" id="SSF50182">
    <property type="entry name" value="Sm-like ribonucleoproteins"/>
    <property type="match status" value="1"/>
</dbReference>
<dbReference type="PROSITE" id="PS52002">
    <property type="entry name" value="SM"/>
    <property type="match status" value="1"/>
</dbReference>
<organism>
    <name type="scientific">Yersinia pseudotuberculosis serotype I (strain IP32953)</name>
    <dbReference type="NCBI Taxonomy" id="273123"/>
    <lineage>
        <taxon>Bacteria</taxon>
        <taxon>Pseudomonadati</taxon>
        <taxon>Pseudomonadota</taxon>
        <taxon>Gammaproteobacteria</taxon>
        <taxon>Enterobacterales</taxon>
        <taxon>Yersiniaceae</taxon>
        <taxon>Yersinia</taxon>
    </lineage>
</organism>
<name>HFQ_YERPS</name>
<gene>
    <name evidence="1" type="primary">hfq</name>
    <name type="synonym">ymr</name>
    <name type="ordered locus">YPTB0425</name>
</gene>